<organism>
    <name type="scientific">Ruminiclostridium cellulolyticum (strain ATCC 35319 / DSM 5812 / JCM 6584 / H10)</name>
    <name type="common">Clostridium cellulolyticum</name>
    <dbReference type="NCBI Taxonomy" id="394503"/>
    <lineage>
        <taxon>Bacteria</taxon>
        <taxon>Bacillati</taxon>
        <taxon>Bacillota</taxon>
        <taxon>Clostridia</taxon>
        <taxon>Eubacteriales</taxon>
        <taxon>Oscillospiraceae</taxon>
        <taxon>Ruminiclostridium</taxon>
    </lineage>
</organism>
<protein>
    <recommendedName>
        <fullName evidence="1">GMP synthase [glutamine-hydrolyzing]</fullName>
        <ecNumber evidence="1">6.3.5.2</ecNumber>
    </recommendedName>
    <alternativeName>
        <fullName evidence="1">GMP synthetase</fullName>
    </alternativeName>
    <alternativeName>
        <fullName evidence="1">Glutamine amidotransferase</fullName>
    </alternativeName>
</protein>
<reference key="1">
    <citation type="submission" date="2009-01" db="EMBL/GenBank/DDBJ databases">
        <title>Complete sequence of Clostridium cellulolyticum H10.</title>
        <authorList>
            <consortium name="US DOE Joint Genome Institute"/>
            <person name="Lucas S."/>
            <person name="Copeland A."/>
            <person name="Lapidus A."/>
            <person name="Glavina del Rio T."/>
            <person name="Dalin E."/>
            <person name="Tice H."/>
            <person name="Bruce D."/>
            <person name="Goodwin L."/>
            <person name="Pitluck S."/>
            <person name="Chertkov O."/>
            <person name="Saunders E."/>
            <person name="Brettin T."/>
            <person name="Detter J.C."/>
            <person name="Han C."/>
            <person name="Larimer F."/>
            <person name="Land M."/>
            <person name="Hauser L."/>
            <person name="Kyrpides N."/>
            <person name="Ivanova N."/>
            <person name="Zhou J."/>
            <person name="Richardson P."/>
        </authorList>
    </citation>
    <scope>NUCLEOTIDE SEQUENCE [LARGE SCALE GENOMIC DNA]</scope>
    <source>
        <strain>ATCC 35319 / DSM 5812 / JCM 6584 / H10</strain>
    </source>
</reference>
<keyword id="KW-0067">ATP-binding</keyword>
<keyword id="KW-0315">Glutamine amidotransferase</keyword>
<keyword id="KW-0332">GMP biosynthesis</keyword>
<keyword id="KW-0436">Ligase</keyword>
<keyword id="KW-0547">Nucleotide-binding</keyword>
<keyword id="KW-0658">Purine biosynthesis</keyword>
<keyword id="KW-1185">Reference proteome</keyword>
<accession>B8I4P0</accession>
<evidence type="ECO:0000255" key="1">
    <source>
        <dbReference type="HAMAP-Rule" id="MF_00344"/>
    </source>
</evidence>
<dbReference type="EC" id="6.3.5.2" evidence="1"/>
<dbReference type="EMBL" id="CP001348">
    <property type="protein sequence ID" value="ACL76544.1"/>
    <property type="molecule type" value="Genomic_DNA"/>
</dbReference>
<dbReference type="RefSeq" id="WP_015925637.1">
    <property type="nucleotide sequence ID" value="NC_011898.1"/>
</dbReference>
<dbReference type="SMR" id="B8I4P0"/>
<dbReference type="STRING" id="394503.Ccel_2202"/>
<dbReference type="MEROPS" id="C26.957"/>
<dbReference type="KEGG" id="cce:Ccel_2202"/>
<dbReference type="eggNOG" id="COG0519">
    <property type="taxonomic scope" value="Bacteria"/>
</dbReference>
<dbReference type="HOGENOM" id="CLU_014340_0_5_9"/>
<dbReference type="OrthoDB" id="9802219at2"/>
<dbReference type="UniPathway" id="UPA00189">
    <property type="reaction ID" value="UER00296"/>
</dbReference>
<dbReference type="Proteomes" id="UP000001349">
    <property type="component" value="Chromosome"/>
</dbReference>
<dbReference type="GO" id="GO:0005829">
    <property type="term" value="C:cytosol"/>
    <property type="evidence" value="ECO:0007669"/>
    <property type="project" value="TreeGrafter"/>
</dbReference>
<dbReference type="GO" id="GO:0005524">
    <property type="term" value="F:ATP binding"/>
    <property type="evidence" value="ECO:0007669"/>
    <property type="project" value="UniProtKB-UniRule"/>
</dbReference>
<dbReference type="GO" id="GO:0003921">
    <property type="term" value="F:GMP synthase activity"/>
    <property type="evidence" value="ECO:0007669"/>
    <property type="project" value="InterPro"/>
</dbReference>
<dbReference type="CDD" id="cd01742">
    <property type="entry name" value="GATase1_GMP_Synthase"/>
    <property type="match status" value="1"/>
</dbReference>
<dbReference type="CDD" id="cd01997">
    <property type="entry name" value="GMP_synthase_C"/>
    <property type="match status" value="1"/>
</dbReference>
<dbReference type="FunFam" id="3.30.300.10:FF:000002">
    <property type="entry name" value="GMP synthase [glutamine-hydrolyzing]"/>
    <property type="match status" value="1"/>
</dbReference>
<dbReference type="FunFam" id="3.40.50.620:FF:000001">
    <property type="entry name" value="GMP synthase [glutamine-hydrolyzing]"/>
    <property type="match status" value="1"/>
</dbReference>
<dbReference type="FunFam" id="3.40.50.880:FF:000001">
    <property type="entry name" value="GMP synthase [glutamine-hydrolyzing]"/>
    <property type="match status" value="1"/>
</dbReference>
<dbReference type="Gene3D" id="3.30.300.10">
    <property type="match status" value="1"/>
</dbReference>
<dbReference type="Gene3D" id="3.40.50.880">
    <property type="match status" value="1"/>
</dbReference>
<dbReference type="Gene3D" id="3.40.50.620">
    <property type="entry name" value="HUPs"/>
    <property type="match status" value="1"/>
</dbReference>
<dbReference type="HAMAP" id="MF_00344">
    <property type="entry name" value="GMP_synthase"/>
    <property type="match status" value="1"/>
</dbReference>
<dbReference type="InterPro" id="IPR029062">
    <property type="entry name" value="Class_I_gatase-like"/>
</dbReference>
<dbReference type="InterPro" id="IPR017926">
    <property type="entry name" value="GATASE"/>
</dbReference>
<dbReference type="InterPro" id="IPR001674">
    <property type="entry name" value="GMP_synth_C"/>
</dbReference>
<dbReference type="InterPro" id="IPR004739">
    <property type="entry name" value="GMP_synth_GATase"/>
</dbReference>
<dbReference type="InterPro" id="IPR022955">
    <property type="entry name" value="GMP_synthase"/>
</dbReference>
<dbReference type="InterPro" id="IPR025777">
    <property type="entry name" value="GMPS_ATP_PPase_dom"/>
</dbReference>
<dbReference type="InterPro" id="IPR022310">
    <property type="entry name" value="NAD/GMP_synthase"/>
</dbReference>
<dbReference type="InterPro" id="IPR014729">
    <property type="entry name" value="Rossmann-like_a/b/a_fold"/>
</dbReference>
<dbReference type="NCBIfam" id="TIGR00884">
    <property type="entry name" value="guaA_Cterm"/>
    <property type="match status" value="1"/>
</dbReference>
<dbReference type="NCBIfam" id="TIGR00888">
    <property type="entry name" value="guaA_Nterm"/>
    <property type="match status" value="1"/>
</dbReference>
<dbReference type="NCBIfam" id="NF000848">
    <property type="entry name" value="PRK00074.1"/>
    <property type="match status" value="1"/>
</dbReference>
<dbReference type="PANTHER" id="PTHR11922:SF2">
    <property type="entry name" value="GMP SYNTHASE [GLUTAMINE-HYDROLYZING]"/>
    <property type="match status" value="1"/>
</dbReference>
<dbReference type="PANTHER" id="PTHR11922">
    <property type="entry name" value="GMP SYNTHASE-RELATED"/>
    <property type="match status" value="1"/>
</dbReference>
<dbReference type="Pfam" id="PF00117">
    <property type="entry name" value="GATase"/>
    <property type="match status" value="1"/>
</dbReference>
<dbReference type="Pfam" id="PF00958">
    <property type="entry name" value="GMP_synt_C"/>
    <property type="match status" value="1"/>
</dbReference>
<dbReference type="Pfam" id="PF02540">
    <property type="entry name" value="NAD_synthase"/>
    <property type="match status" value="1"/>
</dbReference>
<dbReference type="PRINTS" id="PR00099">
    <property type="entry name" value="CPSGATASE"/>
</dbReference>
<dbReference type="PRINTS" id="PR00096">
    <property type="entry name" value="GATASE"/>
</dbReference>
<dbReference type="SUPFAM" id="SSF52402">
    <property type="entry name" value="Adenine nucleotide alpha hydrolases-like"/>
    <property type="match status" value="1"/>
</dbReference>
<dbReference type="SUPFAM" id="SSF52317">
    <property type="entry name" value="Class I glutamine amidotransferase-like"/>
    <property type="match status" value="1"/>
</dbReference>
<dbReference type="SUPFAM" id="SSF54810">
    <property type="entry name" value="GMP synthetase C-terminal dimerisation domain"/>
    <property type="match status" value="1"/>
</dbReference>
<dbReference type="PROSITE" id="PS51273">
    <property type="entry name" value="GATASE_TYPE_1"/>
    <property type="match status" value="1"/>
</dbReference>
<dbReference type="PROSITE" id="PS51553">
    <property type="entry name" value="GMPS_ATP_PPASE"/>
    <property type="match status" value="1"/>
</dbReference>
<proteinExistence type="inferred from homology"/>
<feature type="chain" id="PRO_1000205295" description="GMP synthase [glutamine-hydrolyzing]">
    <location>
        <begin position="1"/>
        <end position="511"/>
    </location>
</feature>
<feature type="domain" description="Glutamine amidotransferase type-1" evidence="1">
    <location>
        <begin position="5"/>
        <end position="195"/>
    </location>
</feature>
<feature type="domain" description="GMPS ATP-PPase" evidence="1">
    <location>
        <begin position="196"/>
        <end position="386"/>
    </location>
</feature>
<feature type="active site" description="Nucleophile" evidence="1">
    <location>
        <position position="82"/>
    </location>
</feature>
<feature type="active site" evidence="1">
    <location>
        <position position="169"/>
    </location>
</feature>
<feature type="active site" evidence="1">
    <location>
        <position position="171"/>
    </location>
</feature>
<feature type="binding site" evidence="1">
    <location>
        <begin position="223"/>
        <end position="229"/>
    </location>
    <ligand>
        <name>ATP</name>
        <dbReference type="ChEBI" id="CHEBI:30616"/>
    </ligand>
</feature>
<sequence>MNNEMILVLDFGGQYNQLIARRVREANVYCEVIPYNASLERIKSYNAKGIIFTGGPNSVLDEGAPKCDPGVFELGIPVLGICYGMQLMSVMLGGSVTAANQREYGKVEICVDKSQPLFRDVDENTICWMSHTYYVDTPPKGFEVIAKSANCPTGAMQHVEKNLYAVQFHPEVMHTPKGKEMLKNFLYNICGCKGDWKMSSFVENSINAIREKVGDKKVLCALSGGVDSSVAAVLIHKAIGKQLTCIFVDHGLLRKYEGDQVEQIFRKQYDINLIRVNCEDRFLQRLKGVSDPETKRKIIGEEFIRVFEDEAKKIGKVDFLVQGTIYPDVIESGIGDAAVIKSHHNVGGLPEHVDFKEIIEPLRSLFKDEVRRAGEELGIPEDLVWRQPFPGPGLAIRVIGDLTKEKLDTLRDTDYIFREEIKAAGLDKEINQYFTVLTNMRSVGVMGDERTYDYALALRAVTTTDFMTADWARIPYDILEKVSTRIVNEVKQINRIVYDITSKPPATIEWE</sequence>
<comment type="function">
    <text evidence="1">Catalyzes the synthesis of GMP from XMP.</text>
</comment>
<comment type="catalytic activity">
    <reaction evidence="1">
        <text>XMP + L-glutamine + ATP + H2O = GMP + L-glutamate + AMP + diphosphate + 2 H(+)</text>
        <dbReference type="Rhea" id="RHEA:11680"/>
        <dbReference type="ChEBI" id="CHEBI:15377"/>
        <dbReference type="ChEBI" id="CHEBI:15378"/>
        <dbReference type="ChEBI" id="CHEBI:29985"/>
        <dbReference type="ChEBI" id="CHEBI:30616"/>
        <dbReference type="ChEBI" id="CHEBI:33019"/>
        <dbReference type="ChEBI" id="CHEBI:57464"/>
        <dbReference type="ChEBI" id="CHEBI:58115"/>
        <dbReference type="ChEBI" id="CHEBI:58359"/>
        <dbReference type="ChEBI" id="CHEBI:456215"/>
        <dbReference type="EC" id="6.3.5.2"/>
    </reaction>
</comment>
<comment type="pathway">
    <text evidence="1">Purine metabolism; GMP biosynthesis; GMP from XMP (L-Gln route): step 1/1.</text>
</comment>
<comment type="subunit">
    <text evidence="1">Homodimer.</text>
</comment>
<gene>
    <name evidence="1" type="primary">guaA</name>
    <name type="ordered locus">Ccel_2202</name>
</gene>
<name>GUAA_RUMCH</name>